<organism>
    <name type="scientific">Arabidopsis thaliana</name>
    <name type="common">Mouse-ear cress</name>
    <dbReference type="NCBI Taxonomy" id="3702"/>
    <lineage>
        <taxon>Eukaryota</taxon>
        <taxon>Viridiplantae</taxon>
        <taxon>Streptophyta</taxon>
        <taxon>Embryophyta</taxon>
        <taxon>Tracheophyta</taxon>
        <taxon>Spermatophyta</taxon>
        <taxon>Magnoliopsida</taxon>
        <taxon>eudicotyledons</taxon>
        <taxon>Gunneridae</taxon>
        <taxon>Pentapetalae</taxon>
        <taxon>rosids</taxon>
        <taxon>malvids</taxon>
        <taxon>Brassicales</taxon>
        <taxon>Brassicaceae</taxon>
        <taxon>Camelineae</taxon>
        <taxon>Arabidopsis</taxon>
    </lineage>
</organism>
<gene>
    <name evidence="5" type="primary">FTSHI5</name>
    <name evidence="4" type="synonym">EMB2458</name>
    <name evidence="7" type="ordered locus">At3g04340</name>
    <name evidence="8" type="ORF">T6K12.4</name>
</gene>
<protein>
    <recommendedName>
        <fullName>Probable inactive ATP-dependent zinc metalloprotease FTSHI 5, chloroplastic</fullName>
        <shortName evidence="5">AtFTSHI5</shortName>
    </recommendedName>
    <alternativeName>
        <fullName evidence="4">Protein EMBRYO DEFECTIVE 2458</fullName>
    </alternativeName>
    <alternativeName>
        <fullName evidence="5">Protein FTSH INACTIVE PROTEASE 5</fullName>
    </alternativeName>
</protein>
<reference key="1">
    <citation type="journal article" date="2000" name="Nature">
        <title>Sequence and analysis of chromosome 3 of the plant Arabidopsis thaliana.</title>
        <authorList>
            <person name="Salanoubat M."/>
            <person name="Lemcke K."/>
            <person name="Rieger M."/>
            <person name="Ansorge W."/>
            <person name="Unseld M."/>
            <person name="Fartmann B."/>
            <person name="Valle G."/>
            <person name="Bloecker H."/>
            <person name="Perez-Alonso M."/>
            <person name="Obermaier B."/>
            <person name="Delseny M."/>
            <person name="Boutry M."/>
            <person name="Grivell L.A."/>
            <person name="Mache R."/>
            <person name="Puigdomenech P."/>
            <person name="De Simone V."/>
            <person name="Choisne N."/>
            <person name="Artiguenave F."/>
            <person name="Robert C."/>
            <person name="Brottier P."/>
            <person name="Wincker P."/>
            <person name="Cattolico L."/>
            <person name="Weissenbach J."/>
            <person name="Saurin W."/>
            <person name="Quetier F."/>
            <person name="Schaefer M."/>
            <person name="Mueller-Auer S."/>
            <person name="Gabel C."/>
            <person name="Fuchs M."/>
            <person name="Benes V."/>
            <person name="Wurmbach E."/>
            <person name="Drzonek H."/>
            <person name="Erfle H."/>
            <person name="Jordan N."/>
            <person name="Bangert S."/>
            <person name="Wiedelmann R."/>
            <person name="Kranz H."/>
            <person name="Voss H."/>
            <person name="Holland R."/>
            <person name="Brandt P."/>
            <person name="Nyakatura G."/>
            <person name="Vezzi A."/>
            <person name="D'Angelo M."/>
            <person name="Pallavicini A."/>
            <person name="Toppo S."/>
            <person name="Simionati B."/>
            <person name="Conrad A."/>
            <person name="Hornischer K."/>
            <person name="Kauer G."/>
            <person name="Loehnert T.-H."/>
            <person name="Nordsiek G."/>
            <person name="Reichelt J."/>
            <person name="Scharfe M."/>
            <person name="Schoen O."/>
            <person name="Bargues M."/>
            <person name="Terol J."/>
            <person name="Climent J."/>
            <person name="Navarro P."/>
            <person name="Collado C."/>
            <person name="Perez-Perez A."/>
            <person name="Ottenwaelder B."/>
            <person name="Duchemin D."/>
            <person name="Cooke R."/>
            <person name="Laudie M."/>
            <person name="Berger-Llauro C."/>
            <person name="Purnelle B."/>
            <person name="Masuy D."/>
            <person name="de Haan M."/>
            <person name="Maarse A.C."/>
            <person name="Alcaraz J.-P."/>
            <person name="Cottet A."/>
            <person name="Casacuberta E."/>
            <person name="Monfort A."/>
            <person name="Argiriou A."/>
            <person name="Flores M."/>
            <person name="Liguori R."/>
            <person name="Vitale D."/>
            <person name="Mannhaupt G."/>
            <person name="Haase D."/>
            <person name="Schoof H."/>
            <person name="Rudd S."/>
            <person name="Zaccaria P."/>
            <person name="Mewes H.-W."/>
            <person name="Mayer K.F.X."/>
            <person name="Kaul S."/>
            <person name="Town C.D."/>
            <person name="Koo H.L."/>
            <person name="Tallon L.J."/>
            <person name="Jenkins J."/>
            <person name="Rooney T."/>
            <person name="Rizzo M."/>
            <person name="Walts A."/>
            <person name="Utterback T."/>
            <person name="Fujii C.Y."/>
            <person name="Shea T.P."/>
            <person name="Creasy T.H."/>
            <person name="Haas B."/>
            <person name="Maiti R."/>
            <person name="Wu D."/>
            <person name="Peterson J."/>
            <person name="Van Aken S."/>
            <person name="Pai G."/>
            <person name="Militscher J."/>
            <person name="Sellers P."/>
            <person name="Gill J.E."/>
            <person name="Feldblyum T.V."/>
            <person name="Preuss D."/>
            <person name="Lin X."/>
            <person name="Nierman W.C."/>
            <person name="Salzberg S.L."/>
            <person name="White O."/>
            <person name="Venter J.C."/>
            <person name="Fraser C.M."/>
            <person name="Kaneko T."/>
            <person name="Nakamura Y."/>
            <person name="Sato S."/>
            <person name="Kato T."/>
            <person name="Asamizu E."/>
            <person name="Sasamoto S."/>
            <person name="Kimura T."/>
            <person name="Idesawa K."/>
            <person name="Kawashima K."/>
            <person name="Kishida Y."/>
            <person name="Kiyokawa C."/>
            <person name="Kohara M."/>
            <person name="Matsumoto M."/>
            <person name="Matsuno A."/>
            <person name="Muraki A."/>
            <person name="Nakayama S."/>
            <person name="Nakazaki N."/>
            <person name="Shinpo S."/>
            <person name="Takeuchi C."/>
            <person name="Wada T."/>
            <person name="Watanabe A."/>
            <person name="Yamada M."/>
            <person name="Yasuda M."/>
            <person name="Tabata S."/>
        </authorList>
    </citation>
    <scope>NUCLEOTIDE SEQUENCE [LARGE SCALE GENOMIC DNA]</scope>
    <source>
        <strain>cv. Columbia</strain>
    </source>
</reference>
<reference key="2">
    <citation type="journal article" date="2017" name="Plant J.">
        <title>Araport11: a complete reannotation of the Arabidopsis thaliana reference genome.</title>
        <authorList>
            <person name="Cheng C.Y."/>
            <person name="Krishnakumar V."/>
            <person name="Chan A.P."/>
            <person name="Thibaud-Nissen F."/>
            <person name="Schobel S."/>
            <person name="Town C.D."/>
        </authorList>
    </citation>
    <scope>GENOME REANNOTATION</scope>
    <source>
        <strain>cv. Columbia</strain>
    </source>
</reference>
<reference key="3">
    <citation type="journal article" date="2003" name="Science">
        <title>Empirical analysis of transcriptional activity in the Arabidopsis genome.</title>
        <authorList>
            <person name="Yamada K."/>
            <person name="Lim J."/>
            <person name="Dale J.M."/>
            <person name="Chen H."/>
            <person name="Shinn P."/>
            <person name="Palm C.J."/>
            <person name="Southwick A.M."/>
            <person name="Wu H.C."/>
            <person name="Kim C.J."/>
            <person name="Nguyen M."/>
            <person name="Pham P.K."/>
            <person name="Cheuk R.F."/>
            <person name="Karlin-Newmann G."/>
            <person name="Liu S.X."/>
            <person name="Lam B."/>
            <person name="Sakano H."/>
            <person name="Wu T."/>
            <person name="Yu G."/>
            <person name="Miranda M."/>
            <person name="Quach H.L."/>
            <person name="Tripp M."/>
            <person name="Chang C.H."/>
            <person name="Lee J.M."/>
            <person name="Toriumi M.J."/>
            <person name="Chan M.M."/>
            <person name="Tang C.C."/>
            <person name="Onodera C.S."/>
            <person name="Deng J.M."/>
            <person name="Akiyama K."/>
            <person name="Ansari Y."/>
            <person name="Arakawa T."/>
            <person name="Banh J."/>
            <person name="Banno F."/>
            <person name="Bowser L."/>
            <person name="Brooks S.Y."/>
            <person name="Carninci P."/>
            <person name="Chao Q."/>
            <person name="Choy N."/>
            <person name="Enju A."/>
            <person name="Goldsmith A.D."/>
            <person name="Gurjal M."/>
            <person name="Hansen N.F."/>
            <person name="Hayashizaki Y."/>
            <person name="Johnson-Hopson C."/>
            <person name="Hsuan V.W."/>
            <person name="Iida K."/>
            <person name="Karnes M."/>
            <person name="Khan S."/>
            <person name="Koesema E."/>
            <person name="Ishida J."/>
            <person name="Jiang P.X."/>
            <person name="Jones T."/>
            <person name="Kawai J."/>
            <person name="Kamiya A."/>
            <person name="Meyers C."/>
            <person name="Nakajima M."/>
            <person name="Narusaka M."/>
            <person name="Seki M."/>
            <person name="Sakurai T."/>
            <person name="Satou M."/>
            <person name="Tamse R."/>
            <person name="Vaysberg M."/>
            <person name="Wallender E.K."/>
            <person name="Wong C."/>
            <person name="Yamamura Y."/>
            <person name="Yuan S."/>
            <person name="Shinozaki K."/>
            <person name="Davis R.W."/>
            <person name="Theologis A."/>
            <person name="Ecker J.R."/>
        </authorList>
    </citation>
    <scope>NUCLEOTIDE SEQUENCE [LARGE SCALE MRNA] OF 299-1320</scope>
    <source>
        <strain>cv. Columbia</strain>
    </source>
</reference>
<reference key="4">
    <citation type="journal article" date="2010" name="Curr. Genomics">
        <title>Indispensable roles of plastids in arabidopsis thaliana embryogenesis.</title>
        <authorList>
            <person name="Hsu S.C."/>
            <person name="Belmonte M.F."/>
            <person name="Harada J.J."/>
            <person name="Inoue K."/>
        </authorList>
    </citation>
    <scope>IDENTIFICATION</scope>
    <scope>DISRUPTION PHENOTYPE</scope>
</reference>
<reference key="5">
    <citation type="journal article" date="2012" name="Physiol. Plantarum">
        <title>FtsH proteases located in the plant chloroplast.</title>
        <authorList>
            <person name="Wagner R."/>
            <person name="Aigner H."/>
            <person name="Funk C."/>
        </authorList>
    </citation>
    <scope>GENE FAMILY</scope>
    <scope>REVIEW</scope>
</reference>
<reference key="6">
    <citation type="journal article" date="2014" name="PLoS ONE">
        <title>FtsHi4 is essential for embryogenesis due to its influence on chloroplast development in Arabidopsis.</title>
        <authorList>
            <person name="Lu X."/>
            <person name="Zhang D."/>
            <person name="Li S."/>
            <person name="Su Y."/>
            <person name="Liang Q."/>
            <person name="Meng H."/>
            <person name="Shen S."/>
            <person name="Fan Y."/>
            <person name="Liu C."/>
            <person name="Zhang C."/>
        </authorList>
    </citation>
    <scope>DISRUPTION PHENOTYPE</scope>
    <scope>FUNCTION</scope>
</reference>
<sequence length="1320" mass="152258">MDFISASSLSSPFSTQLSPIYLSSGIVSLKPRHRVKNRNFGSRESNNKSRKIVPIRGCFGFSGSFLRSKQSDYGSEAVSESLRLCGEGNELVLSSEYNSAKTRESVIQFVTKPLVYALFCIAIGLSPIRSFQAPALAVPFVSDVIWKKKKERVREKEVVLKAVDHEFSDYTRRLLETVSVLLKTIEIVRKENGEVAEVGAALDAVKVEKEKLQKEIMSGLYRDMRRLRKERDLLMKRADKIVDEALSLKKQSEKLLRKGAREKMEKLEESVDIMESEYNKIWERIDEIDDIILKKETTTLSFGVRELIFIERECVELVKSFNRELNQKSFESVPESSITKLSRSEIKQELVNAQRKHLEQMILPNVLELEEVDPFFDRDSVDFSLRIKKRLEESKKLQRDLQNRIRKRMKKFGEEKLFVQKTPEGEAVKGFPEAEVKWMFGEKEVVVPKAIQLHLRHGWKKWQEEAKADLKQKLLEDVDFGKQYIAQRQEQVLLDRDRVVSKTWYNEDKSRWEMDPMAVPYAVSRKLIDSARIRHDYAVMYVALKGDDKEFYVDIKEYEMLFEKFGGFDALYLKMLACGIPTSVHLMWIPMSELSLQQQFLLVTRVVSRVFNALRKTQVVSNAKDTVLEKIRNINDDIMMAVVFPVIEFIIPYQLRLRLGMAWPEEIEQTVGSTWYLQWQSEAEMNFKSRNTEDFQWFLWFLIRSSIYGFVLYHVFRFLKRKVPRLLGYGPFRRDPNVRKFWRVKSYFTYRKRRIKQKRKAGIDPIKTAFDRMKRVKNPPIPLKNFASIESMREEINEVVAFLQNPKAFQEMGARAPRGVLIVGERGTGKTSLALAIAAEARVPVVNVEAQELEAGLWVGQSAANVRELFQTARDLAPVIIFVEDFDLFAGVRGKFVHTKQQDHESFINQLLVELDGFEKQDGVVLMATTRNHKQIDEALRRPGRMDRVFHLQSPTEMERERILHNAAEETMDRELVDLVDWRKVSEKTTLLRPIELKLVPMALESSAFRSKFLDTDELLSYVSWFATFSHIVPPWLRKTKVAKTMGKMLVNHLGLNLTKDDLENVVDLMEPYGQISNGIELLNPTVDWTRETKFPHAVWAAGRALITLLIPNFDVVENLWLEPSSWEGIGCTKITKVTSGGSAIGNTESRSYLEKKLVFCFGSHIASQMLLPPGDENFLSSSEITKAQEIATRMVLQYGWGPDDSPAVYYATNAVSALSMGNNHEYEMAGKVEKIYDLAYEKAKGMLLKNRRVLEKITEELLEFEILTHKDLERIVHENGGIREKEPFFLSGTNYNEALSRSFLDVGDPPETALLSAPT</sequence>
<comment type="function">
    <text evidence="3 6">Required for plastid development during embryogenesis (PubMed:24964212). Might be involved in chaperone functions or play a structural role in the thylakoid FtsH complex (Probable).</text>
</comment>
<comment type="subunit">
    <text evidence="1">Oligomer.</text>
</comment>
<comment type="subcellular location">
    <subcellularLocation>
        <location evidence="2">Plastid</location>
        <location evidence="2">Chloroplast membrane</location>
        <topology evidence="2">Multi-pass membrane protein</topology>
    </subcellularLocation>
</comment>
<comment type="disruption phenotype">
    <text evidence="3 4">Embryo defective.</text>
</comment>
<comment type="similarity">
    <text evidence="6">In the N-terminal section; belongs to the AAA ATPase family.</text>
</comment>
<comment type="similarity">
    <text evidence="6">In the C-terminal section; belongs to the peptidase M41 family.</text>
</comment>
<comment type="caution">
    <text evidence="6">Lacks the conserved zinc-binding motif HEXXH, which presumably renders it inactive for proteolysis.</text>
</comment>
<comment type="sequence caution" evidence="6">
    <conflict type="erroneous gene model prediction">
        <sequence resource="EMBL-CDS" id="AAF26780"/>
    </conflict>
</comment>
<comment type="sequence caution" evidence="6">
    <conflict type="erroneous termination">
        <sequence resource="EMBL" id="AY080629"/>
    </conflict>
    <text>Truncated C-terminus.</text>
</comment>
<feature type="transit peptide" description="Chloroplast" evidence="2">
    <location>
        <begin position="1"/>
        <end position="43"/>
    </location>
</feature>
<feature type="chain" id="PRO_0000434644" description="Probable inactive ATP-dependent zinc metalloprotease FTSHI 5, chloroplastic">
    <location>
        <begin position="44"/>
        <end position="1320"/>
    </location>
</feature>
<feature type="transmembrane region" description="Helical" evidence="2">
    <location>
        <begin position="571"/>
        <end position="591"/>
    </location>
</feature>
<feature type="transmembrane region" description="Helical" evidence="2">
    <location>
        <begin position="633"/>
        <end position="653"/>
    </location>
</feature>
<feature type="transmembrane region" description="Helical" evidence="2">
    <location>
        <begin position="695"/>
        <end position="715"/>
    </location>
</feature>
<feature type="binding site" evidence="2">
    <location>
        <begin position="824"/>
        <end position="831"/>
    </location>
    <ligand>
        <name>ATP</name>
        <dbReference type="ChEBI" id="CHEBI:30616"/>
    </ligand>
</feature>
<feature type="helix" evidence="9">
    <location>
        <begin position="169"/>
        <end position="190"/>
    </location>
</feature>
<feature type="helix" evidence="9">
    <location>
        <begin position="195"/>
        <end position="256"/>
    </location>
</feature>
<feature type="turn" evidence="10">
    <location>
        <begin position="257"/>
        <end position="259"/>
    </location>
</feature>
<feature type="helix" evidence="9">
    <location>
        <begin position="261"/>
        <end position="329"/>
    </location>
</feature>
<feature type="helix" evidence="9">
    <location>
        <begin position="379"/>
        <end position="409"/>
    </location>
</feature>
<feature type="turn" evidence="9">
    <location>
        <begin position="410"/>
        <end position="412"/>
    </location>
</feature>
<feature type="strand" evidence="9">
    <location>
        <begin position="440"/>
        <end position="442"/>
    </location>
</feature>
<feature type="helix" evidence="9">
    <location>
        <begin position="451"/>
        <end position="476"/>
    </location>
</feature>
<feature type="helix" evidence="9">
    <location>
        <begin position="479"/>
        <end position="500"/>
    </location>
</feature>
<feature type="strand" evidence="9">
    <location>
        <begin position="503"/>
        <end position="506"/>
    </location>
</feature>
<feature type="turn" evidence="9">
    <location>
        <begin position="507"/>
        <end position="510"/>
    </location>
</feature>
<feature type="strand" evidence="9">
    <location>
        <begin position="511"/>
        <end position="514"/>
    </location>
</feature>
<feature type="helix" evidence="9">
    <location>
        <begin position="516"/>
        <end position="518"/>
    </location>
</feature>
<feature type="helix" evidence="9">
    <location>
        <begin position="519"/>
        <end position="524"/>
    </location>
</feature>
<feature type="strand" evidence="9">
    <location>
        <begin position="528"/>
        <end position="533"/>
    </location>
</feature>
<feature type="helix" evidence="9">
    <location>
        <begin position="535"/>
        <end position="537"/>
    </location>
</feature>
<feature type="strand" evidence="9">
    <location>
        <begin position="539"/>
        <end position="544"/>
    </location>
</feature>
<feature type="strand" evidence="9">
    <location>
        <begin position="550"/>
        <end position="555"/>
    </location>
</feature>
<feature type="helix" evidence="9">
    <location>
        <begin position="556"/>
        <end position="561"/>
    </location>
</feature>
<feature type="turn" evidence="9">
    <location>
        <begin position="563"/>
        <end position="565"/>
    </location>
</feature>
<feature type="helix" evidence="9">
    <location>
        <begin position="568"/>
        <end position="577"/>
    </location>
</feature>
<feature type="strand" evidence="9">
    <location>
        <begin position="582"/>
        <end position="584"/>
    </location>
</feature>
<feature type="helix" evidence="9">
    <location>
        <begin position="591"/>
        <end position="593"/>
    </location>
</feature>
<feature type="helix" evidence="9">
    <location>
        <begin position="596"/>
        <end position="614"/>
    </location>
</feature>
<feature type="helix" evidence="9">
    <location>
        <begin position="765"/>
        <end position="770"/>
    </location>
</feature>
<feature type="turn" evidence="9">
    <location>
        <begin position="783"/>
        <end position="785"/>
    </location>
</feature>
<feature type="turn" evidence="9">
    <location>
        <begin position="790"/>
        <end position="792"/>
    </location>
</feature>
<feature type="helix" evidence="9">
    <location>
        <begin position="793"/>
        <end position="804"/>
    </location>
</feature>
<feature type="helix" evidence="9">
    <location>
        <begin position="806"/>
        <end position="812"/>
    </location>
</feature>
<feature type="strand" evidence="9">
    <location>
        <begin position="819"/>
        <end position="824"/>
    </location>
</feature>
<feature type="helix" evidence="9">
    <location>
        <begin position="830"/>
        <end position="841"/>
    </location>
</feature>
<feature type="strand" evidence="9">
    <location>
        <begin position="845"/>
        <end position="848"/>
    </location>
</feature>
<feature type="helix" evidence="9">
    <location>
        <begin position="850"/>
        <end position="853"/>
    </location>
</feature>
<feature type="helix" evidence="9">
    <location>
        <begin position="861"/>
        <end position="874"/>
    </location>
</feature>
<feature type="strand" evidence="9">
    <location>
        <begin position="880"/>
        <end position="884"/>
    </location>
</feature>
<feature type="turn" evidence="9">
    <location>
        <begin position="886"/>
        <end position="889"/>
    </location>
</feature>
<feature type="helix" evidence="9">
    <location>
        <begin position="902"/>
        <end position="915"/>
    </location>
</feature>
<feature type="strand" evidence="9">
    <location>
        <begin position="925"/>
        <end position="931"/>
    </location>
</feature>
<feature type="strand" evidence="9">
    <location>
        <begin position="933"/>
        <end position="936"/>
    </location>
</feature>
<feature type="helix" evidence="9">
    <location>
        <begin position="938"/>
        <end position="940"/>
    </location>
</feature>
<feature type="turn" evidence="9">
    <location>
        <begin position="943"/>
        <end position="945"/>
    </location>
</feature>
<feature type="strand" evidence="9">
    <location>
        <begin position="948"/>
        <end position="952"/>
    </location>
</feature>
<feature type="helix" evidence="9">
    <location>
        <begin position="957"/>
        <end position="971"/>
    </location>
</feature>
<feature type="helix" evidence="9">
    <location>
        <begin position="974"/>
        <end position="976"/>
    </location>
</feature>
<feature type="turn" evidence="9">
    <location>
        <begin position="977"/>
        <end position="979"/>
    </location>
</feature>
<feature type="helix" evidence="9">
    <location>
        <begin position="982"/>
        <end position="988"/>
    </location>
</feature>
<feature type="helix" evidence="9">
    <location>
        <begin position="994"/>
        <end position="1009"/>
    </location>
</feature>
<feature type="helix" evidence="9">
    <location>
        <begin position="1017"/>
        <end position="1028"/>
    </location>
</feature>
<feature type="turn" evidence="9">
    <location>
        <begin position="1029"/>
        <end position="1032"/>
    </location>
</feature>
<feature type="helix" evidence="9">
    <location>
        <begin position="1035"/>
        <end position="1038"/>
    </location>
</feature>
<feature type="helix" evidence="9">
    <location>
        <begin position="1041"/>
        <end position="1054"/>
    </location>
</feature>
<feature type="helix" evidence="9">
    <location>
        <begin position="1060"/>
        <end position="1067"/>
    </location>
</feature>
<feature type="helix" evidence="9">
    <location>
        <begin position="1091"/>
        <end position="1110"/>
    </location>
</feature>
<feature type="strand" evidence="9">
    <location>
        <begin position="1116"/>
        <end position="1122"/>
    </location>
</feature>
<feature type="strand" evidence="9">
    <location>
        <begin position="1130"/>
        <end position="1136"/>
    </location>
</feature>
<feature type="helix" evidence="9">
    <location>
        <begin position="1151"/>
        <end position="1160"/>
    </location>
</feature>
<feature type="helix" evidence="9">
    <location>
        <begin position="1163"/>
        <end position="1171"/>
    </location>
</feature>
<feature type="strand" evidence="10">
    <location>
        <begin position="1179"/>
        <end position="1181"/>
    </location>
</feature>
<feature type="helix" evidence="9">
    <location>
        <begin position="1182"/>
        <end position="1197"/>
    </location>
</feature>
<feature type="turn" evidence="9">
    <location>
        <begin position="1222"/>
        <end position="1224"/>
    </location>
</feature>
<feature type="helix" evidence="9">
    <location>
        <begin position="1226"/>
        <end position="1248"/>
    </location>
</feature>
<feature type="helix" evidence="9">
    <location>
        <begin position="1249"/>
        <end position="1251"/>
    </location>
</feature>
<feature type="helix" evidence="9">
    <location>
        <begin position="1252"/>
        <end position="1265"/>
    </location>
</feature>
<feature type="strand" evidence="9">
    <location>
        <begin position="1266"/>
        <end position="1268"/>
    </location>
</feature>
<feature type="helix" evidence="9">
    <location>
        <begin position="1271"/>
        <end position="1279"/>
    </location>
</feature>
<dbReference type="EMBL" id="AC016829">
    <property type="protein sequence ID" value="AAF26780.1"/>
    <property type="status" value="ALT_SEQ"/>
    <property type="molecule type" value="Genomic_DNA"/>
</dbReference>
<dbReference type="EMBL" id="CP002686">
    <property type="protein sequence ID" value="AEE74068.1"/>
    <property type="molecule type" value="Genomic_DNA"/>
</dbReference>
<dbReference type="EMBL" id="AY080629">
    <property type="status" value="NOT_ANNOTATED_CDS"/>
    <property type="molecule type" value="mRNA"/>
</dbReference>
<dbReference type="RefSeq" id="NP_187084.6">
    <property type="nucleotide sequence ID" value="NM_111305.7"/>
</dbReference>
<dbReference type="PDB" id="8XKU">
    <property type="method" value="EM"/>
    <property type="resolution" value="3.20 A"/>
    <property type="chains" value="C=1-1320"/>
</dbReference>
<dbReference type="PDB" id="8XKV">
    <property type="method" value="EM"/>
    <property type="resolution" value="3.30 A"/>
    <property type="chains" value="C=1-1320"/>
</dbReference>
<dbReference type="PDBsum" id="8XKU"/>
<dbReference type="PDBsum" id="8XKV"/>
<dbReference type="EMDB" id="EMD-38425"/>
<dbReference type="EMDB" id="EMD-38428"/>
<dbReference type="SMR" id="F4J3N2"/>
<dbReference type="FunCoup" id="F4J3N2">
    <property type="interactions" value="1396"/>
</dbReference>
<dbReference type="STRING" id="3702.F4J3N2"/>
<dbReference type="PaxDb" id="3702-AT3G04340.1"/>
<dbReference type="ProteomicsDB" id="247379"/>
<dbReference type="EnsemblPlants" id="AT3G04340.1">
    <property type="protein sequence ID" value="AT3G04340.1"/>
    <property type="gene ID" value="AT3G04340"/>
</dbReference>
<dbReference type="GeneID" id="819589"/>
<dbReference type="Gramene" id="AT3G04340.1">
    <property type="protein sequence ID" value="AT3G04340.1"/>
    <property type="gene ID" value="AT3G04340"/>
</dbReference>
<dbReference type="KEGG" id="ath:AT3G04340"/>
<dbReference type="Araport" id="AT3G04340"/>
<dbReference type="TAIR" id="AT3G04340">
    <property type="gene designation" value="EMB2458"/>
</dbReference>
<dbReference type="eggNOG" id="KOG0731">
    <property type="taxonomic scope" value="Eukaryota"/>
</dbReference>
<dbReference type="HOGENOM" id="CLU_004637_0_0_1"/>
<dbReference type="InParanoid" id="F4J3N2"/>
<dbReference type="OMA" id="HLFHGWK"/>
<dbReference type="PRO" id="PR:F4J3N2"/>
<dbReference type="Proteomes" id="UP000006548">
    <property type="component" value="Chromosome 3"/>
</dbReference>
<dbReference type="ExpressionAtlas" id="F4J3N2">
    <property type="expression patterns" value="baseline and differential"/>
</dbReference>
<dbReference type="GO" id="GO:0009507">
    <property type="term" value="C:chloroplast"/>
    <property type="evidence" value="ECO:0007005"/>
    <property type="project" value="TAIR"/>
</dbReference>
<dbReference type="GO" id="GO:0009941">
    <property type="term" value="C:chloroplast envelope"/>
    <property type="evidence" value="ECO:0007005"/>
    <property type="project" value="TAIR"/>
</dbReference>
<dbReference type="GO" id="GO:0009706">
    <property type="term" value="C:chloroplast inner membrane"/>
    <property type="evidence" value="ECO:0000314"/>
    <property type="project" value="TAIR"/>
</dbReference>
<dbReference type="GO" id="GO:0005829">
    <property type="term" value="C:cytosol"/>
    <property type="evidence" value="ECO:0007005"/>
    <property type="project" value="TAIR"/>
</dbReference>
<dbReference type="GO" id="GO:0009506">
    <property type="term" value="C:plasmodesma"/>
    <property type="evidence" value="ECO:0007005"/>
    <property type="project" value="TAIR"/>
</dbReference>
<dbReference type="GO" id="GO:0062091">
    <property type="term" value="C:Ycf2/FtsHi complex"/>
    <property type="evidence" value="ECO:0000314"/>
    <property type="project" value="TAIR"/>
</dbReference>
<dbReference type="GO" id="GO:0005524">
    <property type="term" value="F:ATP binding"/>
    <property type="evidence" value="ECO:0007669"/>
    <property type="project" value="UniProtKB-KW"/>
</dbReference>
<dbReference type="GO" id="GO:0016887">
    <property type="term" value="F:ATP hydrolysis activity"/>
    <property type="evidence" value="ECO:0007669"/>
    <property type="project" value="InterPro"/>
</dbReference>
<dbReference type="GO" id="GO:0004176">
    <property type="term" value="F:ATP-dependent peptidase activity"/>
    <property type="evidence" value="ECO:0007669"/>
    <property type="project" value="InterPro"/>
</dbReference>
<dbReference type="GO" id="GO:0016464">
    <property type="term" value="F:chloroplast protein-transporting ATPase activity"/>
    <property type="evidence" value="ECO:0000314"/>
    <property type="project" value="TAIR"/>
</dbReference>
<dbReference type="GO" id="GO:0004222">
    <property type="term" value="F:metalloendopeptidase activity"/>
    <property type="evidence" value="ECO:0007669"/>
    <property type="project" value="InterPro"/>
</dbReference>
<dbReference type="GO" id="GO:0045454">
    <property type="term" value="P:cell redox homeostasis"/>
    <property type="evidence" value="ECO:0000315"/>
    <property type="project" value="TAIR"/>
</dbReference>
<dbReference type="GO" id="GO:0009658">
    <property type="term" value="P:chloroplast organization"/>
    <property type="evidence" value="ECO:0000315"/>
    <property type="project" value="TAIR"/>
</dbReference>
<dbReference type="GO" id="GO:0045037">
    <property type="term" value="P:protein import into chloroplast stroma"/>
    <property type="evidence" value="ECO:0000314"/>
    <property type="project" value="TAIR"/>
</dbReference>
<dbReference type="GO" id="GO:0006508">
    <property type="term" value="P:proteolysis"/>
    <property type="evidence" value="ECO:0007669"/>
    <property type="project" value="UniProtKB-KW"/>
</dbReference>
<dbReference type="GO" id="GO:0080093">
    <property type="term" value="P:regulation of photorespiration"/>
    <property type="evidence" value="ECO:0000315"/>
    <property type="project" value="TAIR"/>
</dbReference>
<dbReference type="FunFam" id="1.20.58.760:FF:000015">
    <property type="entry name" value="ATP-dependent zinc metalloprotease FtsH 3"/>
    <property type="match status" value="1"/>
</dbReference>
<dbReference type="FunFam" id="3.40.50.300:FF:001891">
    <property type="entry name" value="ATP-dependent zinc metalloprotease FtsH 3"/>
    <property type="match status" value="1"/>
</dbReference>
<dbReference type="Gene3D" id="3.40.50.300">
    <property type="entry name" value="P-loop containing nucleotide triphosphate hydrolases"/>
    <property type="match status" value="1"/>
</dbReference>
<dbReference type="Gene3D" id="1.20.58.760">
    <property type="entry name" value="Peptidase M41"/>
    <property type="match status" value="1"/>
</dbReference>
<dbReference type="InterPro" id="IPR003593">
    <property type="entry name" value="AAA+_ATPase"/>
</dbReference>
<dbReference type="InterPro" id="IPR003959">
    <property type="entry name" value="ATPase_AAA_core"/>
</dbReference>
<dbReference type="InterPro" id="IPR027417">
    <property type="entry name" value="P-loop_NTPase"/>
</dbReference>
<dbReference type="InterPro" id="IPR000642">
    <property type="entry name" value="Peptidase_M41"/>
</dbReference>
<dbReference type="InterPro" id="IPR037219">
    <property type="entry name" value="Peptidase_M41-like"/>
</dbReference>
<dbReference type="PANTHER" id="PTHR23076:SF58">
    <property type="entry name" value="INACTIVE ATP-DEPENDENT ZINC METALLOPROTEASE FTSHI 5, CHLOROPLASTIC-RELATED"/>
    <property type="match status" value="1"/>
</dbReference>
<dbReference type="PANTHER" id="PTHR23076">
    <property type="entry name" value="METALLOPROTEASE M41 FTSH"/>
    <property type="match status" value="1"/>
</dbReference>
<dbReference type="Pfam" id="PF00004">
    <property type="entry name" value="AAA"/>
    <property type="match status" value="1"/>
</dbReference>
<dbReference type="Pfam" id="PF01434">
    <property type="entry name" value="Peptidase_M41"/>
    <property type="match status" value="1"/>
</dbReference>
<dbReference type="SMART" id="SM00382">
    <property type="entry name" value="AAA"/>
    <property type="match status" value="1"/>
</dbReference>
<dbReference type="SUPFAM" id="SSF140990">
    <property type="entry name" value="FtsH protease domain-like"/>
    <property type="match status" value="1"/>
</dbReference>
<dbReference type="SUPFAM" id="SSF52540">
    <property type="entry name" value="P-loop containing nucleoside triphosphate hydrolases"/>
    <property type="match status" value="1"/>
</dbReference>
<evidence type="ECO:0000250" key="1">
    <source>
        <dbReference type="UniProtKB" id="O80860"/>
    </source>
</evidence>
<evidence type="ECO:0000255" key="2"/>
<evidence type="ECO:0000269" key="3">
    <source>
    </source>
</evidence>
<evidence type="ECO:0000303" key="4">
    <source>
    </source>
</evidence>
<evidence type="ECO:0000303" key="5">
    <source>
    </source>
</evidence>
<evidence type="ECO:0000305" key="6"/>
<evidence type="ECO:0000312" key="7">
    <source>
        <dbReference type="Araport" id="AT3G04340"/>
    </source>
</evidence>
<evidence type="ECO:0000312" key="8">
    <source>
        <dbReference type="EMBL" id="AAF26780.1"/>
    </source>
</evidence>
<evidence type="ECO:0007829" key="9">
    <source>
        <dbReference type="PDB" id="8XKU"/>
    </source>
</evidence>
<evidence type="ECO:0007829" key="10">
    <source>
        <dbReference type="PDB" id="8XKV"/>
    </source>
</evidence>
<accession>F4J3N2</accession>
<accession>Q9M8Z0</accession>
<proteinExistence type="evidence at protein level"/>
<keyword id="KW-0002">3D-structure</keyword>
<keyword id="KW-0067">ATP-binding</keyword>
<keyword id="KW-0150">Chloroplast</keyword>
<keyword id="KW-0378">Hydrolase</keyword>
<keyword id="KW-0472">Membrane</keyword>
<keyword id="KW-0547">Nucleotide-binding</keyword>
<keyword id="KW-0934">Plastid</keyword>
<keyword id="KW-0645">Protease</keyword>
<keyword id="KW-1185">Reference proteome</keyword>
<keyword id="KW-0809">Transit peptide</keyword>
<keyword id="KW-0812">Transmembrane</keyword>
<keyword id="KW-1133">Transmembrane helix</keyword>
<name>FTSI5_ARATH</name>